<accession>B1WRN0</accession>
<feature type="chain" id="PRO_1000166415" description="Small ribosomal subunit protein uS15">
    <location>
        <begin position="1"/>
        <end position="89"/>
    </location>
</feature>
<gene>
    <name evidence="1" type="primary">rpsO</name>
    <name evidence="1" type="synonym">rps15</name>
    <name type="ordered locus">cce_4123</name>
</gene>
<protein>
    <recommendedName>
        <fullName evidence="1">Small ribosomal subunit protein uS15</fullName>
    </recommendedName>
    <alternativeName>
        <fullName evidence="2">30S ribosomal protein S15</fullName>
    </alternativeName>
</protein>
<name>RS15_CROS5</name>
<comment type="function">
    <text evidence="1">One of the primary rRNA binding proteins, it binds directly to 16S rRNA where it helps nucleate assembly of the platform of the 30S subunit by binding and bridging several RNA helices of the 16S rRNA.</text>
</comment>
<comment type="function">
    <text evidence="1">Forms an intersubunit bridge (bridge B4) with the 23S rRNA of the 50S subunit in the ribosome.</text>
</comment>
<comment type="subunit">
    <text evidence="1">Part of the 30S ribosomal subunit. Forms a bridge to the 50S subunit in the 70S ribosome, contacting the 23S rRNA.</text>
</comment>
<comment type="similarity">
    <text evidence="1">Belongs to the universal ribosomal protein uS15 family.</text>
</comment>
<sequence length="89" mass="10361">MSLTASEKQVLMSEYQVHETDTGSADLQVAILTKRITQLTDHLKQNPKDHASRRGLLKMIGRRRRLLGYINKKDSNRYQTLIKRLGIRR</sequence>
<proteinExistence type="inferred from homology"/>
<evidence type="ECO:0000255" key="1">
    <source>
        <dbReference type="HAMAP-Rule" id="MF_01343"/>
    </source>
</evidence>
<evidence type="ECO:0000305" key="2"/>
<keyword id="KW-1185">Reference proteome</keyword>
<keyword id="KW-0687">Ribonucleoprotein</keyword>
<keyword id="KW-0689">Ribosomal protein</keyword>
<keyword id="KW-0694">RNA-binding</keyword>
<keyword id="KW-0699">rRNA-binding</keyword>
<reference key="1">
    <citation type="journal article" date="2008" name="Proc. Natl. Acad. Sci. U.S.A.">
        <title>The genome of Cyanothece 51142, a unicellular diazotrophic cyanobacterium important in the marine nitrogen cycle.</title>
        <authorList>
            <person name="Welsh E.A."/>
            <person name="Liberton M."/>
            <person name="Stoeckel J."/>
            <person name="Loh T."/>
            <person name="Elvitigala T."/>
            <person name="Wang C."/>
            <person name="Wollam A."/>
            <person name="Fulton R.S."/>
            <person name="Clifton S.W."/>
            <person name="Jacobs J.M."/>
            <person name="Aurora R."/>
            <person name="Ghosh B.K."/>
            <person name="Sherman L.A."/>
            <person name="Smith R.D."/>
            <person name="Wilson R.K."/>
            <person name="Pakrasi H.B."/>
        </authorList>
    </citation>
    <scope>NUCLEOTIDE SEQUENCE [LARGE SCALE GENOMIC DNA]</scope>
    <source>
        <strain>ATCC 51142 / BH68</strain>
    </source>
</reference>
<organism>
    <name type="scientific">Crocosphaera subtropica (strain ATCC 51142 / BH68)</name>
    <name type="common">Cyanothece sp. (strain ATCC 51142)</name>
    <dbReference type="NCBI Taxonomy" id="43989"/>
    <lineage>
        <taxon>Bacteria</taxon>
        <taxon>Bacillati</taxon>
        <taxon>Cyanobacteriota</taxon>
        <taxon>Cyanophyceae</taxon>
        <taxon>Oscillatoriophycideae</taxon>
        <taxon>Chroococcales</taxon>
        <taxon>Aphanothecaceae</taxon>
        <taxon>Crocosphaera</taxon>
        <taxon>Crocosphaera subtropica</taxon>
    </lineage>
</organism>
<dbReference type="EMBL" id="CP000806">
    <property type="protein sequence ID" value="ACB53471.1"/>
    <property type="molecule type" value="Genomic_DNA"/>
</dbReference>
<dbReference type="RefSeq" id="WP_009543797.1">
    <property type="nucleotide sequence ID" value="NC_010546.1"/>
</dbReference>
<dbReference type="SMR" id="B1WRN0"/>
<dbReference type="STRING" id="43989.cce_4123"/>
<dbReference type="KEGG" id="cyt:cce_4123"/>
<dbReference type="eggNOG" id="COG0184">
    <property type="taxonomic scope" value="Bacteria"/>
</dbReference>
<dbReference type="HOGENOM" id="CLU_148518_0_0_3"/>
<dbReference type="OrthoDB" id="9799262at2"/>
<dbReference type="Proteomes" id="UP000001203">
    <property type="component" value="Chromosome circular"/>
</dbReference>
<dbReference type="GO" id="GO:0022627">
    <property type="term" value="C:cytosolic small ribosomal subunit"/>
    <property type="evidence" value="ECO:0007669"/>
    <property type="project" value="TreeGrafter"/>
</dbReference>
<dbReference type="GO" id="GO:0019843">
    <property type="term" value="F:rRNA binding"/>
    <property type="evidence" value="ECO:0007669"/>
    <property type="project" value="UniProtKB-UniRule"/>
</dbReference>
<dbReference type="GO" id="GO:0003735">
    <property type="term" value="F:structural constituent of ribosome"/>
    <property type="evidence" value="ECO:0007669"/>
    <property type="project" value="InterPro"/>
</dbReference>
<dbReference type="GO" id="GO:0006412">
    <property type="term" value="P:translation"/>
    <property type="evidence" value="ECO:0007669"/>
    <property type="project" value="UniProtKB-UniRule"/>
</dbReference>
<dbReference type="CDD" id="cd00353">
    <property type="entry name" value="Ribosomal_S15p_S13e"/>
    <property type="match status" value="1"/>
</dbReference>
<dbReference type="FunFam" id="1.10.287.10:FF:000002">
    <property type="entry name" value="30S ribosomal protein S15"/>
    <property type="match status" value="1"/>
</dbReference>
<dbReference type="Gene3D" id="6.10.250.3130">
    <property type="match status" value="1"/>
</dbReference>
<dbReference type="Gene3D" id="1.10.287.10">
    <property type="entry name" value="S15/NS1, RNA-binding"/>
    <property type="match status" value="1"/>
</dbReference>
<dbReference type="HAMAP" id="MF_01343_B">
    <property type="entry name" value="Ribosomal_uS15_B"/>
    <property type="match status" value="1"/>
</dbReference>
<dbReference type="InterPro" id="IPR000589">
    <property type="entry name" value="Ribosomal_uS15"/>
</dbReference>
<dbReference type="InterPro" id="IPR005290">
    <property type="entry name" value="Ribosomal_uS15_bac-type"/>
</dbReference>
<dbReference type="InterPro" id="IPR009068">
    <property type="entry name" value="uS15_NS1_RNA-bd_sf"/>
</dbReference>
<dbReference type="NCBIfam" id="TIGR00952">
    <property type="entry name" value="S15_bact"/>
    <property type="match status" value="1"/>
</dbReference>
<dbReference type="PANTHER" id="PTHR23321">
    <property type="entry name" value="RIBOSOMAL PROTEIN S15, BACTERIAL AND ORGANELLAR"/>
    <property type="match status" value="1"/>
</dbReference>
<dbReference type="PANTHER" id="PTHR23321:SF26">
    <property type="entry name" value="SMALL RIBOSOMAL SUBUNIT PROTEIN US15M"/>
    <property type="match status" value="1"/>
</dbReference>
<dbReference type="Pfam" id="PF00312">
    <property type="entry name" value="Ribosomal_S15"/>
    <property type="match status" value="1"/>
</dbReference>
<dbReference type="SMART" id="SM01387">
    <property type="entry name" value="Ribosomal_S15"/>
    <property type="match status" value="1"/>
</dbReference>
<dbReference type="SUPFAM" id="SSF47060">
    <property type="entry name" value="S15/NS1 RNA-binding domain"/>
    <property type="match status" value="1"/>
</dbReference>
<dbReference type="PROSITE" id="PS00362">
    <property type="entry name" value="RIBOSOMAL_S15"/>
    <property type="match status" value="1"/>
</dbReference>